<dbReference type="EC" id="3.1.3.1"/>
<dbReference type="EMBL" id="X17611">
    <property type="protein sequence ID" value="CAA35613.1"/>
    <property type="molecule type" value="mRNA"/>
</dbReference>
<dbReference type="PIR" id="S08214">
    <property type="entry name" value="S08214"/>
</dbReference>
<dbReference type="PDB" id="4KJD">
    <property type="method" value="X-ray"/>
    <property type="resolution" value="2.21 A"/>
    <property type="chains" value="A/B=21-502"/>
</dbReference>
<dbReference type="PDB" id="4KJG">
    <property type="method" value="X-ray"/>
    <property type="resolution" value="2.38 A"/>
    <property type="chains" value="A/B=21-502"/>
</dbReference>
<dbReference type="PDBsum" id="4KJD"/>
<dbReference type="PDBsum" id="4KJG"/>
<dbReference type="SMR" id="P15693"/>
<dbReference type="FunCoup" id="P15693">
    <property type="interactions" value="56"/>
</dbReference>
<dbReference type="STRING" id="10116.ENSRNOP00000026190"/>
<dbReference type="BindingDB" id="P15693"/>
<dbReference type="GlyCosmos" id="P15693">
    <property type="glycosylation" value="3 sites, No reported glycans"/>
</dbReference>
<dbReference type="GlyGen" id="P15693">
    <property type="glycosylation" value="3 sites"/>
</dbReference>
<dbReference type="iPTMnet" id="P15693"/>
<dbReference type="PhosphoSitePlus" id="P15693"/>
<dbReference type="PaxDb" id="10116-ENSRNOP00000026190"/>
<dbReference type="UCSC" id="RGD:2099">
    <property type="organism name" value="rat"/>
</dbReference>
<dbReference type="AGR" id="RGD:2099"/>
<dbReference type="RGD" id="2099">
    <property type="gene designation" value="Alpi"/>
</dbReference>
<dbReference type="eggNOG" id="KOG4126">
    <property type="taxonomic scope" value="Eukaryota"/>
</dbReference>
<dbReference type="InParanoid" id="P15693"/>
<dbReference type="OrthoDB" id="5818554at2759"/>
<dbReference type="PhylomeDB" id="P15693"/>
<dbReference type="Reactome" id="R-RNO-1483166">
    <property type="pathway name" value="Synthesis of PA"/>
</dbReference>
<dbReference type="Reactome" id="R-RNO-163125">
    <property type="pathway name" value="Post-translational modification: synthesis of GPI-anchored proteins"/>
</dbReference>
<dbReference type="Reactome" id="R-RNO-6811438">
    <property type="pathway name" value="Intra-Golgi traffic"/>
</dbReference>
<dbReference type="Reactome" id="R-RNO-8935690">
    <property type="pathway name" value="Digestion"/>
</dbReference>
<dbReference type="SABIO-RK" id="P15693"/>
<dbReference type="EvolutionaryTrace" id="P15693"/>
<dbReference type="PRO" id="PR:P15693"/>
<dbReference type="Proteomes" id="UP000002494">
    <property type="component" value="Unplaced"/>
</dbReference>
<dbReference type="GO" id="GO:0009897">
    <property type="term" value="C:external side of plasma membrane"/>
    <property type="evidence" value="ECO:0000314"/>
    <property type="project" value="RGD"/>
</dbReference>
<dbReference type="GO" id="GO:0005886">
    <property type="term" value="C:plasma membrane"/>
    <property type="evidence" value="ECO:0000318"/>
    <property type="project" value="GO_Central"/>
</dbReference>
<dbReference type="GO" id="GO:0004035">
    <property type="term" value="F:alkaline phosphatase activity"/>
    <property type="evidence" value="ECO:0000314"/>
    <property type="project" value="UniProtKB"/>
</dbReference>
<dbReference type="GO" id="GO:0000287">
    <property type="term" value="F:magnesium ion binding"/>
    <property type="evidence" value="ECO:0000314"/>
    <property type="project" value="UniProtKB"/>
</dbReference>
<dbReference type="GO" id="GO:0002020">
    <property type="term" value="F:protease binding"/>
    <property type="evidence" value="ECO:0000266"/>
    <property type="project" value="RGD"/>
</dbReference>
<dbReference type="GO" id="GO:0042803">
    <property type="term" value="F:protein homodimerization activity"/>
    <property type="evidence" value="ECO:0000353"/>
    <property type="project" value="UniProtKB"/>
</dbReference>
<dbReference type="GO" id="GO:0008270">
    <property type="term" value="F:zinc ion binding"/>
    <property type="evidence" value="ECO:0000314"/>
    <property type="project" value="UniProtKB"/>
</dbReference>
<dbReference type="GO" id="GO:0071773">
    <property type="term" value="P:cellular response to BMP stimulus"/>
    <property type="evidence" value="ECO:0000266"/>
    <property type="project" value="RGD"/>
</dbReference>
<dbReference type="GO" id="GO:0016311">
    <property type="term" value="P:dephosphorylation"/>
    <property type="evidence" value="ECO:0000314"/>
    <property type="project" value="UniProtKB"/>
</dbReference>
<dbReference type="CDD" id="cd16012">
    <property type="entry name" value="ALP"/>
    <property type="match status" value="1"/>
</dbReference>
<dbReference type="FunFam" id="3.40.720.10:FF:000008">
    <property type="entry name" value="Alkaline phosphatase"/>
    <property type="match status" value="1"/>
</dbReference>
<dbReference type="Gene3D" id="3.40.720.10">
    <property type="entry name" value="Alkaline Phosphatase, subunit A"/>
    <property type="match status" value="1"/>
</dbReference>
<dbReference type="InterPro" id="IPR001952">
    <property type="entry name" value="Alkaline_phosphatase"/>
</dbReference>
<dbReference type="InterPro" id="IPR018299">
    <property type="entry name" value="Alkaline_phosphatase_AS"/>
</dbReference>
<dbReference type="InterPro" id="IPR017850">
    <property type="entry name" value="Alkaline_phosphatase_core_sf"/>
</dbReference>
<dbReference type="PANTHER" id="PTHR11596">
    <property type="entry name" value="ALKALINE PHOSPHATASE"/>
    <property type="match status" value="1"/>
</dbReference>
<dbReference type="PANTHER" id="PTHR11596:SF30">
    <property type="entry name" value="INTESTINAL-TYPE ALKALINE PHOSPHATASE"/>
    <property type="match status" value="1"/>
</dbReference>
<dbReference type="Pfam" id="PF00245">
    <property type="entry name" value="Alk_phosphatase"/>
    <property type="match status" value="1"/>
</dbReference>
<dbReference type="PRINTS" id="PR00113">
    <property type="entry name" value="ALKPHPHTASE"/>
</dbReference>
<dbReference type="SMART" id="SM00098">
    <property type="entry name" value="alkPPc"/>
    <property type="match status" value="1"/>
</dbReference>
<dbReference type="SUPFAM" id="SSF53649">
    <property type="entry name" value="Alkaline phosphatase-like"/>
    <property type="match status" value="1"/>
</dbReference>
<dbReference type="PROSITE" id="PS00123">
    <property type="entry name" value="ALKALINE_PHOSPHATASE"/>
    <property type="match status" value="1"/>
</dbReference>
<organism>
    <name type="scientific">Rattus norvegicus</name>
    <name type="common">Rat</name>
    <dbReference type="NCBI Taxonomy" id="10116"/>
    <lineage>
        <taxon>Eukaryota</taxon>
        <taxon>Metazoa</taxon>
        <taxon>Chordata</taxon>
        <taxon>Craniata</taxon>
        <taxon>Vertebrata</taxon>
        <taxon>Euteleostomi</taxon>
        <taxon>Mammalia</taxon>
        <taxon>Eutheria</taxon>
        <taxon>Euarchontoglires</taxon>
        <taxon>Glires</taxon>
        <taxon>Rodentia</taxon>
        <taxon>Myomorpha</taxon>
        <taxon>Muroidea</taxon>
        <taxon>Muridae</taxon>
        <taxon>Murinae</taxon>
        <taxon>Rattus</taxon>
    </lineage>
</organism>
<evidence type="ECO:0000250" key="1">
    <source>
        <dbReference type="UniProtKB" id="P05186"/>
    </source>
</evidence>
<evidence type="ECO:0000255" key="2"/>
<evidence type="ECO:0000255" key="3">
    <source>
        <dbReference type="PROSITE-ProRule" id="PRU10042"/>
    </source>
</evidence>
<evidence type="ECO:0000269" key="4">
    <source>
    </source>
</evidence>
<evidence type="ECO:0000269" key="5">
    <source>
    </source>
</evidence>
<evidence type="ECO:0000305" key="6"/>
<evidence type="ECO:0007829" key="7">
    <source>
        <dbReference type="PDB" id="4KJD"/>
    </source>
</evidence>
<evidence type="ECO:0007829" key="8">
    <source>
        <dbReference type="PDB" id="4KJG"/>
    </source>
</evidence>
<name>PPBI1_RAT</name>
<sequence length="540" mass="58402">MQGDWVLLLLLGLRIHLSFGVIPVEEENPVFWNQKAKEALDVAKKLQPIQTSAKNLILFLGDGMGVPTVTATRILKGQLGGHLGPETPLAMDHFPFTALSKTYNVDRQVPDSAGTATAYLCGVKANYKTIGVSAAARFNQCNSTFGNEVFSVMHRAKKAGKSVGVVTTTRVQHASPAGTYAHTVNRDWYSDADMPSSALQEGCKDIATQLISNMDIDVILGGGRKFMFPKGTPDPEYPGDSDQSGVRLDSRNLVEEWLAKYQGTRYVWNREQLMQASQDPAVTRLMGLFEPTEMKYDVNRNASADPSLAEMTEVAVRLLSRNPQGFYLFVEGGRIDQGHHAGTAYLALTEAVMFDSAIEKASQLTNEKDTLTLITADHSHVFAFGGYTLRGTSIFGLAPLNAQDGKSYTSILYGNGPGYVLNSGNRPNVTDAESGDVNYKQQAAVPLSSETHGGEDVAIFARGPQAHLVHGVQEQNYIAHVMAFAGCLEPYTDCGLAPPADENRPTTPVQNSAITMNNVLLSLQLLVSMLLLVGTALVVS</sequence>
<comment type="function">
    <text evidence="4 5">Alkaline phosphatase that can hydrolyze various phosphate compounds.</text>
</comment>
<comment type="catalytic activity">
    <reaction evidence="3 4 5">
        <text>a phosphate monoester + H2O = an alcohol + phosphate</text>
        <dbReference type="Rhea" id="RHEA:15017"/>
        <dbReference type="ChEBI" id="CHEBI:15377"/>
        <dbReference type="ChEBI" id="CHEBI:30879"/>
        <dbReference type="ChEBI" id="CHEBI:43474"/>
        <dbReference type="ChEBI" id="CHEBI:67140"/>
        <dbReference type="EC" id="3.1.3.1"/>
    </reaction>
</comment>
<comment type="cofactor">
    <cofactor evidence="5">
        <name>Mg(2+)</name>
        <dbReference type="ChEBI" id="CHEBI:18420"/>
    </cofactor>
    <text evidence="5">Binds 1 Mg(2+) ion.</text>
</comment>
<comment type="cofactor">
    <cofactor evidence="5">
        <name>Zn(2+)</name>
        <dbReference type="ChEBI" id="CHEBI:29105"/>
    </cofactor>
    <text evidence="5">Binds 2 Zn(2+) ions.</text>
</comment>
<comment type="cofactor">
    <cofactor evidence="1">
        <name>Ca(2+)</name>
        <dbReference type="ChEBI" id="CHEBI:29108"/>
    </cofactor>
</comment>
<comment type="subunit">
    <text evidence="5">Homodimer.</text>
</comment>
<comment type="subcellular location">
    <subcellularLocation>
        <location evidence="4">Cell membrane</location>
        <topology evidence="4">Lipid-anchor</topology>
        <topology evidence="4">GPI-anchor</topology>
    </subcellularLocation>
</comment>
<comment type="miscellaneous">
    <text>In most mammals there are four different isozymes: placental (ALPP), germ cell (ALPG), intestinal (ALPI) and tissue non-specific (liver/bone/kidney) (ALPL/TNAP). Rat has two genes for the intestinal isozyme.</text>
</comment>
<comment type="similarity">
    <text evidence="6">Belongs to the alkaline phosphatase family.</text>
</comment>
<feature type="signal peptide" evidence="4">
    <location>
        <begin position="1"/>
        <end position="20"/>
    </location>
</feature>
<feature type="chain" id="PRO_0000024041" description="Intestinal-type alkaline phosphatase 1">
    <location>
        <begin position="21"/>
        <end position="511"/>
    </location>
</feature>
<feature type="propeptide" id="PRO_0000024042" description="Removed in mature form" evidence="2">
    <location>
        <begin position="512"/>
        <end position="540"/>
    </location>
</feature>
<feature type="active site" description="Phosphoserine intermediate" evidence="3 5">
    <location>
        <position position="112"/>
    </location>
</feature>
<feature type="binding site" evidence="5">
    <location>
        <position position="62"/>
    </location>
    <ligand>
        <name>Mg(2+)</name>
        <dbReference type="ChEBI" id="CHEBI:18420"/>
    </ligand>
</feature>
<feature type="binding site" evidence="5">
    <location>
        <position position="62"/>
    </location>
    <ligand>
        <name>Zn(2+)</name>
        <dbReference type="ChEBI" id="CHEBI:29105"/>
        <label>1</label>
    </ligand>
</feature>
<feature type="binding site" evidence="5">
    <location>
        <position position="112"/>
    </location>
    <ligand>
        <name>Zn(2+)</name>
        <dbReference type="ChEBI" id="CHEBI:29105"/>
        <label>1</label>
    </ligand>
</feature>
<feature type="binding site" evidence="5">
    <location>
        <position position="175"/>
    </location>
    <ligand>
        <name>Mg(2+)</name>
        <dbReference type="ChEBI" id="CHEBI:18420"/>
    </ligand>
</feature>
<feature type="binding site" evidence="1">
    <location>
        <position position="236"/>
    </location>
    <ligand>
        <name>Ca(2+)</name>
        <dbReference type="ChEBI" id="CHEBI:29108"/>
    </ligand>
</feature>
<feature type="binding site" evidence="1">
    <location>
        <position position="289"/>
    </location>
    <ligand>
        <name>Ca(2+)</name>
        <dbReference type="ChEBI" id="CHEBI:29108"/>
    </ligand>
</feature>
<feature type="binding site" evidence="1">
    <location>
        <position position="290"/>
    </location>
    <ligand>
        <name>Ca(2+)</name>
        <dbReference type="ChEBI" id="CHEBI:29108"/>
    </ligand>
</feature>
<feature type="binding site" evidence="1">
    <location>
        <position position="305"/>
    </location>
    <ligand>
        <name>Ca(2+)</name>
        <dbReference type="ChEBI" id="CHEBI:29108"/>
    </ligand>
</feature>
<feature type="binding site" evidence="5">
    <location>
        <position position="331"/>
    </location>
    <ligand>
        <name>Mg(2+)</name>
        <dbReference type="ChEBI" id="CHEBI:18420"/>
    </ligand>
</feature>
<feature type="binding site" evidence="5">
    <location>
        <position position="336"/>
    </location>
    <ligand>
        <name>Zn(2+)</name>
        <dbReference type="ChEBI" id="CHEBI:29105"/>
        <label>2</label>
    </ligand>
</feature>
<feature type="binding site" evidence="5">
    <location>
        <position position="340"/>
    </location>
    <ligand>
        <name>Zn(2+)</name>
        <dbReference type="ChEBI" id="CHEBI:29105"/>
        <label>2</label>
    </ligand>
</feature>
<feature type="binding site" evidence="5">
    <location>
        <position position="377"/>
    </location>
    <ligand>
        <name>Zn(2+)</name>
        <dbReference type="ChEBI" id="CHEBI:29105"/>
        <label>1</label>
    </ligand>
</feature>
<feature type="binding site" evidence="5">
    <location>
        <position position="378"/>
    </location>
    <ligand>
        <name>Zn(2+)</name>
        <dbReference type="ChEBI" id="CHEBI:29105"/>
        <label>1</label>
    </ligand>
</feature>
<feature type="binding site" evidence="5">
    <location>
        <position position="452"/>
    </location>
    <ligand>
        <name>Zn(2+)</name>
        <dbReference type="ChEBI" id="CHEBI:29105"/>
        <label>2</label>
    </ligand>
</feature>
<feature type="lipid moiety-binding region" description="GPI-anchor amidated asparagine" evidence="2">
    <location>
        <position position="511"/>
    </location>
</feature>
<feature type="glycosylation site" description="N-linked (GlcNAc...) asparagine" evidence="2">
    <location>
        <position position="142"/>
    </location>
</feature>
<feature type="glycosylation site" description="N-linked (GlcNAc...) asparagine" evidence="5">
    <location>
        <position position="301"/>
    </location>
</feature>
<feature type="glycosylation site" description="N-linked (GlcNAc...) asparagine" evidence="5">
    <location>
        <position position="428"/>
    </location>
</feature>
<feature type="disulfide bond" evidence="5">
    <location>
        <begin position="141"/>
        <end position="203"/>
    </location>
</feature>
<feature type="disulfide bond" evidence="5">
    <location>
        <begin position="487"/>
        <end position="494"/>
    </location>
</feature>
<feature type="helix" evidence="7">
    <location>
        <begin position="25"/>
        <end position="27"/>
    </location>
</feature>
<feature type="helix" evidence="7">
    <location>
        <begin position="29"/>
        <end position="45"/>
    </location>
</feature>
<feature type="strand" evidence="7">
    <location>
        <begin position="54"/>
        <end position="61"/>
    </location>
</feature>
<feature type="helix" evidence="7">
    <location>
        <begin position="66"/>
        <end position="79"/>
    </location>
</feature>
<feature type="helix" evidence="7">
    <location>
        <begin position="91"/>
        <end position="93"/>
    </location>
</feature>
<feature type="strand" evidence="7">
    <location>
        <begin position="95"/>
        <end position="101"/>
    </location>
</feature>
<feature type="strand" evidence="7">
    <location>
        <begin position="105"/>
        <end position="109"/>
    </location>
</feature>
<feature type="helix" evidence="7">
    <location>
        <begin position="112"/>
        <end position="121"/>
    </location>
</feature>
<feature type="strand" evidence="7">
    <location>
        <begin position="130"/>
        <end position="132"/>
    </location>
</feature>
<feature type="helix" evidence="7">
    <location>
        <begin position="141"/>
        <end position="144"/>
    </location>
</feature>
<feature type="helix" evidence="7">
    <location>
        <begin position="152"/>
        <end position="158"/>
    </location>
</feature>
<feature type="strand" evidence="7">
    <location>
        <begin position="162"/>
        <end position="170"/>
    </location>
</feature>
<feature type="helix" evidence="7">
    <location>
        <begin position="174"/>
        <end position="177"/>
    </location>
</feature>
<feature type="turn" evidence="7">
    <location>
        <begin position="178"/>
        <end position="180"/>
    </location>
</feature>
<feature type="helix" evidence="7">
    <location>
        <begin position="191"/>
        <end position="193"/>
    </location>
</feature>
<feature type="helix" evidence="7">
    <location>
        <begin position="196"/>
        <end position="200"/>
    </location>
</feature>
<feature type="helix" evidence="7">
    <location>
        <begin position="206"/>
        <end position="212"/>
    </location>
</feature>
<feature type="strand" evidence="7">
    <location>
        <begin position="217"/>
        <end position="222"/>
    </location>
</feature>
<feature type="helix" evidence="7">
    <location>
        <begin position="224"/>
        <end position="227"/>
    </location>
</feature>
<feature type="helix" evidence="7">
    <location>
        <begin position="241"/>
        <end position="243"/>
    </location>
</feature>
<feature type="strand" evidence="7">
    <location>
        <begin position="247"/>
        <end position="249"/>
    </location>
</feature>
<feature type="helix" evidence="7">
    <location>
        <begin position="253"/>
        <end position="258"/>
    </location>
</feature>
<feature type="strand" evidence="7">
    <location>
        <begin position="264"/>
        <end position="267"/>
    </location>
</feature>
<feature type="helix" evidence="7">
    <location>
        <begin position="270"/>
        <end position="278"/>
    </location>
</feature>
<feature type="strand" evidence="7">
    <location>
        <begin position="284"/>
        <end position="288"/>
    </location>
</feature>
<feature type="strand" evidence="7">
    <location>
        <begin position="290"/>
        <end position="293"/>
    </location>
</feature>
<feature type="helix" evidence="7">
    <location>
        <begin position="297"/>
        <end position="299"/>
    </location>
</feature>
<feature type="turn" evidence="7">
    <location>
        <begin position="302"/>
        <end position="304"/>
    </location>
</feature>
<feature type="helix" evidence="7">
    <location>
        <begin position="308"/>
        <end position="319"/>
    </location>
</feature>
<feature type="strand" evidence="7">
    <location>
        <begin position="326"/>
        <end position="332"/>
    </location>
</feature>
<feature type="helix" evidence="7">
    <location>
        <begin position="335"/>
        <end position="338"/>
    </location>
</feature>
<feature type="helix" evidence="7">
    <location>
        <begin position="344"/>
        <end position="364"/>
    </location>
</feature>
<feature type="turn" evidence="7">
    <location>
        <begin position="367"/>
        <end position="369"/>
    </location>
</feature>
<feature type="strand" evidence="7">
    <location>
        <begin position="370"/>
        <end position="378"/>
    </location>
</feature>
<feature type="strand" evidence="8">
    <location>
        <begin position="379"/>
        <end position="384"/>
    </location>
</feature>
<feature type="strand" evidence="8">
    <location>
        <begin position="409"/>
        <end position="416"/>
    </location>
</feature>
<feature type="helix" evidence="8">
    <location>
        <begin position="431"/>
        <end position="434"/>
    </location>
</feature>
<feature type="strand" evidence="8">
    <location>
        <begin position="443"/>
        <end position="446"/>
    </location>
</feature>
<feature type="strand" evidence="7">
    <location>
        <begin position="457"/>
        <end position="463"/>
    </location>
</feature>
<feature type="helix" evidence="7">
    <location>
        <begin position="466"/>
        <end position="468"/>
    </location>
</feature>
<feature type="strand" evidence="7">
    <location>
        <begin position="471"/>
        <end position="474"/>
    </location>
</feature>
<feature type="helix" evidence="7">
    <location>
        <begin position="477"/>
        <end position="485"/>
    </location>
</feature>
<proteinExistence type="evidence at protein level"/>
<keyword id="KW-0002">3D-structure</keyword>
<keyword id="KW-0106">Calcium</keyword>
<keyword id="KW-1003">Cell membrane</keyword>
<keyword id="KW-0903">Direct protein sequencing</keyword>
<keyword id="KW-1015">Disulfide bond</keyword>
<keyword id="KW-0325">Glycoprotein</keyword>
<keyword id="KW-0336">GPI-anchor</keyword>
<keyword id="KW-0378">Hydrolase</keyword>
<keyword id="KW-0449">Lipoprotein</keyword>
<keyword id="KW-0460">Magnesium</keyword>
<keyword id="KW-0472">Membrane</keyword>
<keyword id="KW-0479">Metal-binding</keyword>
<keyword id="KW-1185">Reference proteome</keyword>
<keyword id="KW-0732">Signal</keyword>
<keyword id="KW-0862">Zinc</keyword>
<gene>
    <name type="primary">Alpi</name>
</gene>
<accession>P15693</accession>
<reference key="1">
    <citation type="journal article" date="1990" name="Biochim. Biophys. Acta">
        <title>Molecular cloning and expression of a cDNA encoding the membrane-associated rat intestinal alkaline phosphatase.</title>
        <authorList>
            <person name="Lowe M."/>
            <person name="Strauss A.W."/>
            <person name="Alpers R."/>
            <person name="Seetharam S."/>
            <person name="Alpers D.H."/>
        </authorList>
    </citation>
    <scope>NUCLEOTIDE SEQUENCE [MRNA]</scope>
    <scope>PROTEIN SEQUENCE OF 21-34 AND 287-300</scope>
    <scope>FUNCTION</scope>
    <scope>CATALYTIC ACTIVITY</scope>
    <scope>SUBCELLULAR LOCATION</scope>
</reference>
<reference key="2">
    <citation type="journal article" date="1995" name="J. Biol. Chem.">
        <title>Two rat intestinal alkaline phosphatase isoforms with different carboxyl-terminal peptides are both membrane-bound by a glycan phosphatidylinositol linkage.</title>
        <authorList>
            <person name="Engle M.J."/>
            <person name="Mahmood A."/>
            <person name="Alpers D.H."/>
        </authorList>
    </citation>
    <scope>GPI-ANCHOR</scope>
</reference>
<reference key="3">
    <citation type="journal article" date="2013" name="J. Struct. Biol.">
        <title>Crystal structure of rat intestinal alkaline phosphatase - Role of crown domain in mammalian alkaline phosphatases.</title>
        <authorList>
            <person name="Ghosh K."/>
            <person name="Mazumder Tagore D."/>
            <person name="Anumula R."/>
            <person name="Lakshmaiah B."/>
            <person name="Kumar P.P."/>
            <person name="Singaram S."/>
            <person name="Matan T."/>
            <person name="Kallipatti S."/>
            <person name="Selvam S."/>
            <person name="Krishnamurthy P."/>
            <person name="Ramarao M."/>
        </authorList>
    </citation>
    <scope>X-RAY CRYSTALLOGRAPHY (2.21 ANGSTROMS) OF 21-502 IN COMPLEX WITH MAGNESIUM AND ZINC</scope>
    <scope>GLYCOSYLATION AT ASN-301 AND ASN-428</scope>
    <scope>DISULFIDE BOND</scope>
    <scope>COFACTOR</scope>
    <scope>FUNCTION</scope>
    <scope>CATALYTIC ACTIVITY</scope>
    <scope>SUBUNIT</scope>
    <scope>ACTIVE SITE</scope>
</reference>
<protein>
    <recommendedName>
        <fullName>Intestinal-type alkaline phosphatase 1</fullName>
        <shortName>IAP-1</shortName>
        <shortName>Intestinal alkaline phosphatase 1</shortName>
        <ecNumber>3.1.3.1</ecNumber>
    </recommendedName>
    <alternativeName>
        <fullName>Intestinal alkaline phosphatase I</fullName>
        <shortName>IAP-I</shortName>
    </alternativeName>
</protein>